<organism>
    <name type="scientific">Clostridium botulinum (strain Hall / ATCC 3502 / NCTC 13319 / Type A)</name>
    <dbReference type="NCBI Taxonomy" id="441771"/>
    <lineage>
        <taxon>Bacteria</taxon>
        <taxon>Bacillati</taxon>
        <taxon>Bacillota</taxon>
        <taxon>Clostridia</taxon>
        <taxon>Eubacteriales</taxon>
        <taxon>Clostridiaceae</taxon>
        <taxon>Clostridium</taxon>
    </lineage>
</organism>
<feature type="chain" id="PRO_1000132101" description="Protein nucleotidyltransferase YdiU">
    <location>
        <begin position="1"/>
        <end position="491"/>
    </location>
</feature>
<feature type="active site" description="Proton acceptor" evidence="1">
    <location>
        <position position="256"/>
    </location>
</feature>
<feature type="binding site" evidence="1">
    <location>
        <position position="94"/>
    </location>
    <ligand>
        <name>ATP</name>
        <dbReference type="ChEBI" id="CHEBI:30616"/>
    </ligand>
</feature>
<feature type="binding site" evidence="1">
    <location>
        <position position="96"/>
    </location>
    <ligand>
        <name>ATP</name>
        <dbReference type="ChEBI" id="CHEBI:30616"/>
    </ligand>
</feature>
<feature type="binding site" evidence="1">
    <location>
        <position position="97"/>
    </location>
    <ligand>
        <name>ATP</name>
        <dbReference type="ChEBI" id="CHEBI:30616"/>
    </ligand>
</feature>
<feature type="binding site" evidence="1">
    <location>
        <position position="117"/>
    </location>
    <ligand>
        <name>ATP</name>
        <dbReference type="ChEBI" id="CHEBI:30616"/>
    </ligand>
</feature>
<feature type="binding site" evidence="1">
    <location>
        <position position="129"/>
    </location>
    <ligand>
        <name>ATP</name>
        <dbReference type="ChEBI" id="CHEBI:30616"/>
    </ligand>
</feature>
<feature type="binding site" evidence="1">
    <location>
        <position position="130"/>
    </location>
    <ligand>
        <name>ATP</name>
        <dbReference type="ChEBI" id="CHEBI:30616"/>
    </ligand>
</feature>
<feature type="binding site" evidence="1">
    <location>
        <position position="180"/>
    </location>
    <ligand>
        <name>ATP</name>
        <dbReference type="ChEBI" id="CHEBI:30616"/>
    </ligand>
</feature>
<feature type="binding site" evidence="1">
    <location>
        <position position="187"/>
    </location>
    <ligand>
        <name>ATP</name>
        <dbReference type="ChEBI" id="CHEBI:30616"/>
    </ligand>
</feature>
<feature type="binding site" evidence="1">
    <location>
        <position position="257"/>
    </location>
    <ligand>
        <name>Mg(2+)</name>
        <dbReference type="ChEBI" id="CHEBI:18420"/>
    </ligand>
</feature>
<feature type="binding site" evidence="1">
    <location>
        <position position="266"/>
    </location>
    <ligand>
        <name>ATP</name>
        <dbReference type="ChEBI" id="CHEBI:30616"/>
    </ligand>
</feature>
<feature type="binding site" evidence="1">
    <location>
        <position position="266"/>
    </location>
    <ligand>
        <name>Mg(2+)</name>
        <dbReference type="ChEBI" id="CHEBI:18420"/>
    </ligand>
</feature>
<comment type="function">
    <text evidence="1">Nucleotidyltransferase involved in the post-translational modification of proteins. It can catalyze the addition of adenosine monophosphate (AMP) or uridine monophosphate (UMP) to a protein, resulting in modifications known as AMPylation and UMPylation.</text>
</comment>
<comment type="catalytic activity">
    <reaction evidence="1">
        <text>L-seryl-[protein] + ATP = 3-O-(5'-adenylyl)-L-seryl-[protein] + diphosphate</text>
        <dbReference type="Rhea" id="RHEA:58120"/>
        <dbReference type="Rhea" id="RHEA-COMP:9863"/>
        <dbReference type="Rhea" id="RHEA-COMP:15073"/>
        <dbReference type="ChEBI" id="CHEBI:29999"/>
        <dbReference type="ChEBI" id="CHEBI:30616"/>
        <dbReference type="ChEBI" id="CHEBI:33019"/>
        <dbReference type="ChEBI" id="CHEBI:142516"/>
        <dbReference type="EC" id="2.7.7.108"/>
    </reaction>
</comment>
<comment type="catalytic activity">
    <reaction evidence="1">
        <text>L-threonyl-[protein] + ATP = 3-O-(5'-adenylyl)-L-threonyl-[protein] + diphosphate</text>
        <dbReference type="Rhea" id="RHEA:54292"/>
        <dbReference type="Rhea" id="RHEA-COMP:11060"/>
        <dbReference type="Rhea" id="RHEA-COMP:13847"/>
        <dbReference type="ChEBI" id="CHEBI:30013"/>
        <dbReference type="ChEBI" id="CHEBI:30616"/>
        <dbReference type="ChEBI" id="CHEBI:33019"/>
        <dbReference type="ChEBI" id="CHEBI:138113"/>
        <dbReference type="EC" id="2.7.7.108"/>
    </reaction>
</comment>
<comment type="catalytic activity">
    <reaction evidence="1">
        <text>L-tyrosyl-[protein] + ATP = O-(5'-adenylyl)-L-tyrosyl-[protein] + diphosphate</text>
        <dbReference type="Rhea" id="RHEA:54288"/>
        <dbReference type="Rhea" id="RHEA-COMP:10136"/>
        <dbReference type="Rhea" id="RHEA-COMP:13846"/>
        <dbReference type="ChEBI" id="CHEBI:30616"/>
        <dbReference type="ChEBI" id="CHEBI:33019"/>
        <dbReference type="ChEBI" id="CHEBI:46858"/>
        <dbReference type="ChEBI" id="CHEBI:83624"/>
        <dbReference type="EC" id="2.7.7.108"/>
    </reaction>
</comment>
<comment type="catalytic activity">
    <reaction evidence="1">
        <text>L-histidyl-[protein] + UTP = N(tele)-(5'-uridylyl)-L-histidyl-[protein] + diphosphate</text>
        <dbReference type="Rhea" id="RHEA:83891"/>
        <dbReference type="Rhea" id="RHEA-COMP:9745"/>
        <dbReference type="Rhea" id="RHEA-COMP:20239"/>
        <dbReference type="ChEBI" id="CHEBI:29979"/>
        <dbReference type="ChEBI" id="CHEBI:33019"/>
        <dbReference type="ChEBI" id="CHEBI:46398"/>
        <dbReference type="ChEBI" id="CHEBI:233474"/>
    </reaction>
</comment>
<comment type="catalytic activity">
    <reaction evidence="1">
        <text>L-seryl-[protein] + UTP = O-(5'-uridylyl)-L-seryl-[protein] + diphosphate</text>
        <dbReference type="Rhea" id="RHEA:64604"/>
        <dbReference type="Rhea" id="RHEA-COMP:9863"/>
        <dbReference type="Rhea" id="RHEA-COMP:16635"/>
        <dbReference type="ChEBI" id="CHEBI:29999"/>
        <dbReference type="ChEBI" id="CHEBI:33019"/>
        <dbReference type="ChEBI" id="CHEBI:46398"/>
        <dbReference type="ChEBI" id="CHEBI:156051"/>
    </reaction>
</comment>
<comment type="catalytic activity">
    <reaction evidence="1">
        <text>L-tyrosyl-[protein] + UTP = O-(5'-uridylyl)-L-tyrosyl-[protein] + diphosphate</text>
        <dbReference type="Rhea" id="RHEA:83887"/>
        <dbReference type="Rhea" id="RHEA-COMP:10136"/>
        <dbReference type="Rhea" id="RHEA-COMP:20238"/>
        <dbReference type="ChEBI" id="CHEBI:33019"/>
        <dbReference type="ChEBI" id="CHEBI:46398"/>
        <dbReference type="ChEBI" id="CHEBI:46858"/>
        <dbReference type="ChEBI" id="CHEBI:90602"/>
    </reaction>
</comment>
<comment type="cofactor">
    <cofactor evidence="1">
        <name>Mg(2+)</name>
        <dbReference type="ChEBI" id="CHEBI:18420"/>
    </cofactor>
    <cofactor evidence="1">
        <name>Mn(2+)</name>
        <dbReference type="ChEBI" id="CHEBI:29035"/>
    </cofactor>
</comment>
<comment type="similarity">
    <text evidence="1">Belongs to the SELO family.</text>
</comment>
<name>SELO_CLOBH</name>
<protein>
    <recommendedName>
        <fullName evidence="1">Protein nucleotidyltransferase YdiU</fullName>
        <ecNumber evidence="1">2.7.7.-</ecNumber>
    </recommendedName>
    <alternativeName>
        <fullName evidence="1">Protein adenylyltransferase YdiU</fullName>
        <ecNumber evidence="1">2.7.7.108</ecNumber>
    </alternativeName>
    <alternativeName>
        <fullName evidence="1">Protein uridylyltransferase YdiU</fullName>
        <ecNumber evidence="1">2.7.7.-</ecNumber>
    </alternativeName>
</protein>
<sequence length="491" mass="55227">MKERKVIIKTGLNLENSYTSLPEIFFTRQSPSRVPSPKLAVLNYSLITSLGLNAQVLQSADGVEILAGNKTPEEAIPISQAYAGHQFGHFTMLGDGRAILLGEHITPQGERFDIQLKGSGKTPYSRGGDGKAALGPMLREYIISEAMNALGIPTTRSLAVVTTGESIMRETELSGAILTRVAASHIRVGTFEYVSRWGTVEELRALANYTLQRHFKKGYDKENPYLFLLQEVIEKQAELIAKWQLVGFVHGVMNTDNMTISGETIDYGPCAFMDVYDPETVFSSIDIYGRYAYGNQPNIATWNLARFAETLLPLLHINPNEAIKIAENAVSDFTKLYKNNWLSGMRAKLGIFNEELEDEYLIEDLLSIMHKYGADYTNTFRALTFDNIEDTVLGGKVEFDKWYKLWQERLTRQEEAKLSSKQLMKSSNPSVIPRNHRVEEALEAAVKEGDYSVMEKLLDALSKPYDHSKEQDYYSKLPEPSTCPYQTYCGT</sequence>
<dbReference type="EC" id="2.7.7.-" evidence="1"/>
<dbReference type="EC" id="2.7.7.108" evidence="1"/>
<dbReference type="EMBL" id="CP000727">
    <property type="protein sequence ID" value="ABS37559.1"/>
    <property type="molecule type" value="Genomic_DNA"/>
</dbReference>
<dbReference type="EMBL" id="AM412317">
    <property type="protein sequence ID" value="CAL82744.1"/>
    <property type="molecule type" value="Genomic_DNA"/>
</dbReference>
<dbReference type="RefSeq" id="WP_011948835.1">
    <property type="nucleotide sequence ID" value="NC_009698.1"/>
</dbReference>
<dbReference type="RefSeq" id="YP_001253720.1">
    <property type="nucleotide sequence ID" value="NC_009495.1"/>
</dbReference>
<dbReference type="RefSeq" id="YP_001387105.1">
    <property type="nucleotide sequence ID" value="NC_009698.1"/>
</dbReference>
<dbReference type="SMR" id="A5I133"/>
<dbReference type="GeneID" id="5185450"/>
<dbReference type="KEGG" id="cbh:CLC_1238"/>
<dbReference type="KEGG" id="cbo:CBO1195"/>
<dbReference type="PATRIC" id="fig|413999.7.peg.1183"/>
<dbReference type="HOGENOM" id="CLU_010245_4_1_9"/>
<dbReference type="PRO" id="PR:A5I133"/>
<dbReference type="Proteomes" id="UP000001986">
    <property type="component" value="Chromosome"/>
</dbReference>
<dbReference type="GO" id="GO:0070733">
    <property type="term" value="F:AMPylase activity"/>
    <property type="evidence" value="ECO:0007669"/>
    <property type="project" value="RHEA"/>
</dbReference>
<dbReference type="GO" id="GO:0005524">
    <property type="term" value="F:ATP binding"/>
    <property type="evidence" value="ECO:0007669"/>
    <property type="project" value="UniProtKB-UniRule"/>
</dbReference>
<dbReference type="GO" id="GO:0000287">
    <property type="term" value="F:magnesium ion binding"/>
    <property type="evidence" value="ECO:0007669"/>
    <property type="project" value="UniProtKB-UniRule"/>
</dbReference>
<dbReference type="HAMAP" id="MF_00692">
    <property type="entry name" value="YdiU_SelO"/>
    <property type="match status" value="1"/>
</dbReference>
<dbReference type="InterPro" id="IPR003846">
    <property type="entry name" value="SelO"/>
</dbReference>
<dbReference type="NCBIfam" id="NF000658">
    <property type="entry name" value="PRK00029.1"/>
    <property type="match status" value="1"/>
</dbReference>
<dbReference type="PANTHER" id="PTHR12153:SF15">
    <property type="entry name" value="PROTEIN ADENYLYLTRANSFERASE SELO, MITOCHONDRIAL"/>
    <property type="match status" value="1"/>
</dbReference>
<dbReference type="PANTHER" id="PTHR12153">
    <property type="entry name" value="SELENOPROTEIN O"/>
    <property type="match status" value="1"/>
</dbReference>
<dbReference type="Pfam" id="PF02696">
    <property type="entry name" value="SelO"/>
    <property type="match status" value="1"/>
</dbReference>
<keyword id="KW-0067">ATP-binding</keyword>
<keyword id="KW-0460">Magnesium</keyword>
<keyword id="KW-0464">Manganese</keyword>
<keyword id="KW-0479">Metal-binding</keyword>
<keyword id="KW-0547">Nucleotide-binding</keyword>
<keyword id="KW-0548">Nucleotidyltransferase</keyword>
<keyword id="KW-1185">Reference proteome</keyword>
<keyword id="KW-0808">Transferase</keyword>
<accession>A5I133</accession>
<accession>A7G2U0</accession>
<reference key="1">
    <citation type="journal article" date="2007" name="Genome Res.">
        <title>Genome sequence of a proteolytic (Group I) Clostridium botulinum strain Hall A and comparative analysis of the clostridial genomes.</title>
        <authorList>
            <person name="Sebaihia M."/>
            <person name="Peck M.W."/>
            <person name="Minton N.P."/>
            <person name="Thomson N.R."/>
            <person name="Holden M.T.G."/>
            <person name="Mitchell W.J."/>
            <person name="Carter A.T."/>
            <person name="Bentley S.D."/>
            <person name="Mason D.R."/>
            <person name="Crossman L."/>
            <person name="Paul C.J."/>
            <person name="Ivens A."/>
            <person name="Wells-Bennik M.H.J."/>
            <person name="Davis I.J."/>
            <person name="Cerdeno-Tarraga A.M."/>
            <person name="Churcher C."/>
            <person name="Quail M.A."/>
            <person name="Chillingworth T."/>
            <person name="Feltwell T."/>
            <person name="Fraser A."/>
            <person name="Goodhead I."/>
            <person name="Hance Z."/>
            <person name="Jagels K."/>
            <person name="Larke N."/>
            <person name="Maddison M."/>
            <person name="Moule S."/>
            <person name="Mungall K."/>
            <person name="Norbertczak H."/>
            <person name="Rabbinowitsch E."/>
            <person name="Sanders M."/>
            <person name="Simmonds M."/>
            <person name="White B."/>
            <person name="Whithead S."/>
            <person name="Parkhill J."/>
        </authorList>
    </citation>
    <scope>NUCLEOTIDE SEQUENCE [LARGE SCALE GENOMIC DNA]</scope>
    <source>
        <strain>Hall / ATCC 3502 / NCTC 13319 / Type A</strain>
    </source>
</reference>
<reference key="2">
    <citation type="journal article" date="2007" name="PLoS ONE">
        <title>Analysis of the neurotoxin complex genes in Clostridium botulinum A1-A4 and B1 strains: BoNT/A3, /Ba4 and /B1 clusters are located within plasmids.</title>
        <authorList>
            <person name="Smith T.J."/>
            <person name="Hill K.K."/>
            <person name="Foley B.T."/>
            <person name="Detter J.C."/>
            <person name="Munk A.C."/>
            <person name="Bruce D.C."/>
            <person name="Doggett N.A."/>
            <person name="Smith L.A."/>
            <person name="Marks J.D."/>
            <person name="Xie G."/>
            <person name="Brettin T.S."/>
        </authorList>
    </citation>
    <scope>NUCLEOTIDE SEQUENCE [LARGE SCALE GENOMIC DNA]</scope>
    <source>
        <strain>Hall / ATCC 3502 / NCTC 13319 / Type A</strain>
    </source>
</reference>
<proteinExistence type="inferred from homology"/>
<evidence type="ECO:0000255" key="1">
    <source>
        <dbReference type="HAMAP-Rule" id="MF_00692"/>
    </source>
</evidence>
<gene>
    <name evidence="1" type="primary">ydiU</name>
    <name evidence="1" type="synonym">selO</name>
    <name type="ordered locus">CBO1195</name>
    <name type="ordered locus">CLC_1238</name>
</gene>